<proteinExistence type="evidence at transcript level"/>
<keyword id="KW-1015">Disulfide bond</keyword>
<keyword id="KW-0325">Glycoprotein</keyword>
<keyword id="KW-1199">Hemostasis impairing toxin</keyword>
<keyword id="KW-0378">Hydrolase</keyword>
<keyword id="KW-0645">Protease</keyword>
<keyword id="KW-0964">Secreted</keyword>
<keyword id="KW-0720">Serine protease</keyword>
<keyword id="KW-0732">Signal</keyword>
<keyword id="KW-0800">Toxin</keyword>
<keyword id="KW-0865">Zymogen</keyword>
<sequence>MVLIRVLANLLILQLSYAQKSSELVIGGDECNINEHRFLVALYDVSSGDFRGSGALINPEWVLTAAHCETEEMKLQFGLHSKRVPNKDKQTRVSKEKFFCESNKNYTKWNKDIMLIKLNRPVKNSTHIAPLSLPSNPPSVGSVCRIMGWGTLSDTEMILPDVPHCANINLLNYSDCQAAYPELPAKSRTLCAGILEGGKDTCSGDSGGPLICNGTFQGIASWGSTLCGYVREPGSYTKVFDHLDWIQSIIAGNTNVTCPL</sequence>
<accession>Q71QI4</accession>
<comment type="function">
    <text evidence="1">Snake venom serine protease that may act in the hemostasis system of the prey.</text>
</comment>
<comment type="subunit">
    <text evidence="1">Monomer.</text>
</comment>
<comment type="subcellular location">
    <subcellularLocation>
        <location evidence="1">Secreted</location>
    </subcellularLocation>
</comment>
<comment type="tissue specificity">
    <text>Expressed by the venom gland.</text>
</comment>
<comment type="similarity">
    <text evidence="3">Belongs to the peptidase S1 family. Snake venom subfamily.</text>
</comment>
<evidence type="ECO:0000250" key="1"/>
<evidence type="ECO:0000255" key="2"/>
<evidence type="ECO:0000255" key="3">
    <source>
        <dbReference type="PROSITE-ProRule" id="PRU00274"/>
    </source>
</evidence>
<reference key="1">
    <citation type="submission" date="2001-06" db="EMBL/GenBank/DDBJ databases">
        <title>Identification of geographic variations and cloning of venom proteins of Trimeresurus stejnegeri: serine proteases and phospholipases.</title>
        <authorList>
            <person name="Tsai I.-H."/>
            <person name="Wang Y.-M."/>
        </authorList>
    </citation>
    <scope>NUCLEOTIDE SEQUENCE [MRNA]</scope>
    <source>
        <tissue>Venom gland</tissue>
    </source>
</reference>
<name>VSP05_TRIST</name>
<feature type="signal peptide" evidence="2">
    <location>
        <begin position="1"/>
        <end position="18"/>
    </location>
</feature>
<feature type="propeptide" id="PRO_0000295830" evidence="1">
    <location>
        <begin position="19"/>
        <end position="24"/>
    </location>
</feature>
<feature type="chain" id="PRO_5000061225" description="Snake venom serine protease KN5">
    <location>
        <begin position="25"/>
        <end position="260"/>
    </location>
</feature>
<feature type="domain" description="Peptidase S1" evidence="3">
    <location>
        <begin position="25"/>
        <end position="251"/>
    </location>
</feature>
<feature type="active site" description="Charge relay system" evidence="1">
    <location>
        <position position="67"/>
    </location>
</feature>
<feature type="active site" description="Charge relay system" evidence="1">
    <location>
        <position position="112"/>
    </location>
</feature>
<feature type="active site" description="Charge relay system" evidence="1">
    <location>
        <position position="206"/>
    </location>
</feature>
<feature type="glycosylation site" description="N-linked (GlcNAc...) asparagine" evidence="2">
    <location>
        <position position="105"/>
    </location>
</feature>
<feature type="glycosylation site" description="N-linked (GlcNAc...) asparagine" evidence="2">
    <location>
        <position position="124"/>
    </location>
</feature>
<feature type="glycosylation site" description="N-linked (GlcNAc...) asparagine" evidence="2">
    <location>
        <position position="172"/>
    </location>
</feature>
<feature type="glycosylation site" description="N-linked (GlcNAc...) asparagine" evidence="2">
    <location>
        <position position="213"/>
    </location>
</feature>
<feature type="glycosylation site" description="N-linked (GlcNAc...) asparagine" evidence="2">
    <location>
        <position position="255"/>
    </location>
</feature>
<feature type="disulfide bond" evidence="3">
    <location>
        <begin position="31"/>
        <end position="165"/>
    </location>
</feature>
<feature type="disulfide bond" evidence="3">
    <location>
        <begin position="100"/>
        <end position="258"/>
    </location>
</feature>
<feature type="disulfide bond" evidence="3">
    <location>
        <begin position="144"/>
        <end position="212"/>
    </location>
</feature>
<feature type="disulfide bond" evidence="3">
    <location>
        <begin position="176"/>
        <end position="191"/>
    </location>
</feature>
<feature type="disulfide bond" evidence="3">
    <location>
        <begin position="202"/>
        <end position="227"/>
    </location>
</feature>
<protein>
    <recommendedName>
        <fullName>Snake venom serine protease KN5</fullName>
        <shortName>SVSP</shortName>
        <ecNumber>3.4.21.-</ecNumber>
    </recommendedName>
</protein>
<organism>
    <name type="scientific">Trimeresurus stejnegeri</name>
    <name type="common">Chinese green tree viper</name>
    <name type="synonym">Viridovipera stejnegeri</name>
    <dbReference type="NCBI Taxonomy" id="39682"/>
    <lineage>
        <taxon>Eukaryota</taxon>
        <taxon>Metazoa</taxon>
        <taxon>Chordata</taxon>
        <taxon>Craniata</taxon>
        <taxon>Vertebrata</taxon>
        <taxon>Euteleostomi</taxon>
        <taxon>Lepidosauria</taxon>
        <taxon>Squamata</taxon>
        <taxon>Bifurcata</taxon>
        <taxon>Unidentata</taxon>
        <taxon>Episquamata</taxon>
        <taxon>Toxicofera</taxon>
        <taxon>Serpentes</taxon>
        <taxon>Colubroidea</taxon>
        <taxon>Viperidae</taxon>
        <taxon>Crotalinae</taxon>
        <taxon>Trimeresurus</taxon>
    </lineage>
</organism>
<dbReference type="EC" id="3.4.21.-"/>
<dbReference type="EMBL" id="AF395773">
    <property type="protein sequence ID" value="AAQ02903.1"/>
    <property type="molecule type" value="mRNA"/>
</dbReference>
<dbReference type="SMR" id="Q71QI4"/>
<dbReference type="MEROPS" id="S01.497"/>
<dbReference type="GO" id="GO:0005576">
    <property type="term" value="C:extracellular region"/>
    <property type="evidence" value="ECO:0007669"/>
    <property type="project" value="UniProtKB-SubCell"/>
</dbReference>
<dbReference type="GO" id="GO:0030141">
    <property type="term" value="C:secretory granule"/>
    <property type="evidence" value="ECO:0007669"/>
    <property type="project" value="TreeGrafter"/>
</dbReference>
<dbReference type="GO" id="GO:0004252">
    <property type="term" value="F:serine-type endopeptidase activity"/>
    <property type="evidence" value="ECO:0007669"/>
    <property type="project" value="InterPro"/>
</dbReference>
<dbReference type="GO" id="GO:0090729">
    <property type="term" value="F:toxin activity"/>
    <property type="evidence" value="ECO:0007669"/>
    <property type="project" value="UniProtKB-KW"/>
</dbReference>
<dbReference type="GO" id="GO:0006508">
    <property type="term" value="P:proteolysis"/>
    <property type="evidence" value="ECO:0007669"/>
    <property type="project" value="UniProtKB-KW"/>
</dbReference>
<dbReference type="CDD" id="cd00190">
    <property type="entry name" value="Tryp_SPc"/>
    <property type="match status" value="1"/>
</dbReference>
<dbReference type="FunFam" id="2.40.10.10:FF:000158">
    <property type="entry name" value="Thrombin-like enzyme saxthrombin"/>
    <property type="match status" value="1"/>
</dbReference>
<dbReference type="Gene3D" id="2.40.10.10">
    <property type="entry name" value="Trypsin-like serine proteases"/>
    <property type="match status" value="2"/>
</dbReference>
<dbReference type="InterPro" id="IPR009003">
    <property type="entry name" value="Peptidase_S1_PA"/>
</dbReference>
<dbReference type="InterPro" id="IPR043504">
    <property type="entry name" value="Peptidase_S1_PA_chymotrypsin"/>
</dbReference>
<dbReference type="InterPro" id="IPR001314">
    <property type="entry name" value="Peptidase_S1A"/>
</dbReference>
<dbReference type="InterPro" id="IPR001254">
    <property type="entry name" value="Trypsin_dom"/>
</dbReference>
<dbReference type="InterPro" id="IPR018114">
    <property type="entry name" value="TRYPSIN_HIS"/>
</dbReference>
<dbReference type="InterPro" id="IPR033116">
    <property type="entry name" value="TRYPSIN_SER"/>
</dbReference>
<dbReference type="PANTHER" id="PTHR24271:SF47">
    <property type="entry name" value="KALLIKREIN-1"/>
    <property type="match status" value="1"/>
</dbReference>
<dbReference type="PANTHER" id="PTHR24271">
    <property type="entry name" value="KALLIKREIN-RELATED"/>
    <property type="match status" value="1"/>
</dbReference>
<dbReference type="Pfam" id="PF00089">
    <property type="entry name" value="Trypsin"/>
    <property type="match status" value="1"/>
</dbReference>
<dbReference type="PRINTS" id="PR00722">
    <property type="entry name" value="CHYMOTRYPSIN"/>
</dbReference>
<dbReference type="SMART" id="SM00020">
    <property type="entry name" value="Tryp_SPc"/>
    <property type="match status" value="1"/>
</dbReference>
<dbReference type="SUPFAM" id="SSF50494">
    <property type="entry name" value="Trypsin-like serine proteases"/>
    <property type="match status" value="1"/>
</dbReference>
<dbReference type="PROSITE" id="PS50240">
    <property type="entry name" value="TRYPSIN_DOM"/>
    <property type="match status" value="1"/>
</dbReference>
<dbReference type="PROSITE" id="PS00134">
    <property type="entry name" value="TRYPSIN_HIS"/>
    <property type="match status" value="1"/>
</dbReference>
<dbReference type="PROSITE" id="PS00135">
    <property type="entry name" value="TRYPSIN_SER"/>
    <property type="match status" value="1"/>
</dbReference>